<evidence type="ECO:0000250" key="1"/>
<evidence type="ECO:0000305" key="2"/>
<sequence>MMADFIKYPVTTEKSYLSMFKNKQYTFDVDLRLTKPQIKKLFETLFGVNVIGINTHRPPRKKVRAGLSTGYRPAYKRVILTLKEGQSIQF</sequence>
<protein>
    <recommendedName>
        <fullName evidence="2">Large ribosomal subunit protein uL23c</fullName>
    </recommendedName>
    <alternativeName>
        <fullName>50S ribosomal protein L23, chloroplastic</fullName>
    </alternativeName>
</protein>
<keyword id="KW-0150">Chloroplast</keyword>
<keyword id="KW-0934">Plastid</keyword>
<keyword id="KW-0687">Ribonucleoprotein</keyword>
<keyword id="KW-0689">Ribosomal protein</keyword>
<keyword id="KW-0694">RNA-binding</keyword>
<keyword id="KW-0699">rRNA-binding</keyword>
<geneLocation type="chloroplast"/>
<gene>
    <name type="primary">rpl23</name>
</gene>
<feature type="chain" id="PRO_0000272930" description="Large ribosomal subunit protein uL23c">
    <location>
        <begin position="1"/>
        <end position="90"/>
    </location>
</feature>
<organism>
    <name type="scientific">Tetradesmus obliquus</name>
    <name type="common">Green alga</name>
    <name type="synonym">Acutodesmus obliquus</name>
    <dbReference type="NCBI Taxonomy" id="3088"/>
    <lineage>
        <taxon>Eukaryota</taxon>
        <taxon>Viridiplantae</taxon>
        <taxon>Chlorophyta</taxon>
        <taxon>core chlorophytes</taxon>
        <taxon>Chlorophyceae</taxon>
        <taxon>CS clade</taxon>
        <taxon>Sphaeropleales</taxon>
        <taxon>Scenedesmaceae</taxon>
        <taxon>Tetradesmus</taxon>
    </lineage>
</organism>
<name>RK23_TETOB</name>
<comment type="function">
    <text evidence="1">Binds to 23S rRNA.</text>
</comment>
<comment type="subunit">
    <text evidence="1">Part of the 50S ribosomal subunit.</text>
</comment>
<comment type="subcellular location">
    <subcellularLocation>
        <location>Plastid</location>
        <location>Chloroplast</location>
    </subcellularLocation>
</comment>
<comment type="similarity">
    <text evidence="2">Belongs to the universal ribosomal protein uL23 family.</text>
</comment>
<comment type="sequence caution" evidence="2">
    <conflict type="erroneous initiation">
        <sequence resource="EMBL-CDS" id="ABD48271"/>
    </conflict>
</comment>
<reference key="1">
    <citation type="journal article" date="2006" name="BMC Evol. Biol.">
        <title>The complete chloroplast genome sequence of the chlorophycean green alga Scenedesmus obliquus reveals a compact gene organization and a biased distribution of genes on the two DNA strands.</title>
        <authorList>
            <person name="de Cambiaire J.-C."/>
            <person name="Otis C."/>
            <person name="Lemieux C."/>
            <person name="Turmel M."/>
        </authorList>
    </citation>
    <scope>NUCLEOTIDE SEQUENCE [LARGE SCALE GENOMIC DNA]</scope>
    <source>
        <strain>UTEX 393</strain>
    </source>
</reference>
<proteinExistence type="inferred from homology"/>
<dbReference type="EMBL" id="DQ396875">
    <property type="protein sequence ID" value="ABD48271.1"/>
    <property type="status" value="ALT_INIT"/>
    <property type="molecule type" value="Genomic_DNA"/>
</dbReference>
<dbReference type="RefSeq" id="YP_635988.2">
    <property type="nucleotide sequence ID" value="NC_008101.1"/>
</dbReference>
<dbReference type="SMR" id="Q1KVT6"/>
<dbReference type="GeneID" id="4099804"/>
<dbReference type="GO" id="GO:0009507">
    <property type="term" value="C:chloroplast"/>
    <property type="evidence" value="ECO:0007669"/>
    <property type="project" value="UniProtKB-SubCell"/>
</dbReference>
<dbReference type="GO" id="GO:1990904">
    <property type="term" value="C:ribonucleoprotein complex"/>
    <property type="evidence" value="ECO:0007669"/>
    <property type="project" value="UniProtKB-KW"/>
</dbReference>
<dbReference type="GO" id="GO:0005840">
    <property type="term" value="C:ribosome"/>
    <property type="evidence" value="ECO:0007669"/>
    <property type="project" value="UniProtKB-KW"/>
</dbReference>
<dbReference type="GO" id="GO:0019843">
    <property type="term" value="F:rRNA binding"/>
    <property type="evidence" value="ECO:0007669"/>
    <property type="project" value="UniProtKB-UniRule"/>
</dbReference>
<dbReference type="GO" id="GO:0003735">
    <property type="term" value="F:structural constituent of ribosome"/>
    <property type="evidence" value="ECO:0007669"/>
    <property type="project" value="InterPro"/>
</dbReference>
<dbReference type="GO" id="GO:0006412">
    <property type="term" value="P:translation"/>
    <property type="evidence" value="ECO:0007669"/>
    <property type="project" value="UniProtKB-UniRule"/>
</dbReference>
<dbReference type="Gene3D" id="3.30.70.330">
    <property type="match status" value="1"/>
</dbReference>
<dbReference type="HAMAP" id="MF_01369_B">
    <property type="entry name" value="Ribosomal_uL23_B"/>
    <property type="match status" value="1"/>
</dbReference>
<dbReference type="InterPro" id="IPR012677">
    <property type="entry name" value="Nucleotide-bd_a/b_plait_sf"/>
</dbReference>
<dbReference type="InterPro" id="IPR013025">
    <property type="entry name" value="Ribosomal_uL23-like"/>
</dbReference>
<dbReference type="InterPro" id="IPR012678">
    <property type="entry name" value="Ribosomal_uL23/eL15/eS24_sf"/>
</dbReference>
<dbReference type="PANTHER" id="PTHR11620">
    <property type="entry name" value="60S RIBOSOMAL PROTEIN L23A"/>
    <property type="match status" value="1"/>
</dbReference>
<dbReference type="Pfam" id="PF00276">
    <property type="entry name" value="Ribosomal_L23"/>
    <property type="match status" value="1"/>
</dbReference>
<dbReference type="SUPFAM" id="SSF54189">
    <property type="entry name" value="Ribosomal proteins S24e, L23 and L15e"/>
    <property type="match status" value="1"/>
</dbReference>
<accession>Q1KVT6</accession>